<proteinExistence type="inferred from homology"/>
<dbReference type="EC" id="5.6.1.7" evidence="1"/>
<dbReference type="EMBL" id="CP000509">
    <property type="protein sequence ID" value="ABL83479.1"/>
    <property type="molecule type" value="Genomic_DNA"/>
</dbReference>
<dbReference type="SMR" id="A1SNU4"/>
<dbReference type="STRING" id="196162.Noca_3982"/>
<dbReference type="KEGG" id="nca:Noca_3982"/>
<dbReference type="eggNOG" id="COG0459">
    <property type="taxonomic scope" value="Bacteria"/>
</dbReference>
<dbReference type="HOGENOM" id="CLU_016503_3_0_11"/>
<dbReference type="OrthoDB" id="9766614at2"/>
<dbReference type="Proteomes" id="UP000000640">
    <property type="component" value="Chromosome"/>
</dbReference>
<dbReference type="GO" id="GO:0005737">
    <property type="term" value="C:cytoplasm"/>
    <property type="evidence" value="ECO:0007669"/>
    <property type="project" value="UniProtKB-SubCell"/>
</dbReference>
<dbReference type="GO" id="GO:0005524">
    <property type="term" value="F:ATP binding"/>
    <property type="evidence" value="ECO:0007669"/>
    <property type="project" value="UniProtKB-UniRule"/>
</dbReference>
<dbReference type="GO" id="GO:0140662">
    <property type="term" value="F:ATP-dependent protein folding chaperone"/>
    <property type="evidence" value="ECO:0007669"/>
    <property type="project" value="InterPro"/>
</dbReference>
<dbReference type="GO" id="GO:0016853">
    <property type="term" value="F:isomerase activity"/>
    <property type="evidence" value="ECO:0007669"/>
    <property type="project" value="UniProtKB-KW"/>
</dbReference>
<dbReference type="GO" id="GO:0051082">
    <property type="term" value="F:unfolded protein binding"/>
    <property type="evidence" value="ECO:0007669"/>
    <property type="project" value="UniProtKB-UniRule"/>
</dbReference>
<dbReference type="GO" id="GO:0042026">
    <property type="term" value="P:protein refolding"/>
    <property type="evidence" value="ECO:0007669"/>
    <property type="project" value="UniProtKB-UniRule"/>
</dbReference>
<dbReference type="CDD" id="cd03344">
    <property type="entry name" value="GroEL"/>
    <property type="match status" value="1"/>
</dbReference>
<dbReference type="FunFam" id="3.50.7.10:FF:000001">
    <property type="entry name" value="60 kDa chaperonin"/>
    <property type="match status" value="1"/>
</dbReference>
<dbReference type="Gene3D" id="3.50.7.10">
    <property type="entry name" value="GroEL"/>
    <property type="match status" value="1"/>
</dbReference>
<dbReference type="Gene3D" id="1.10.560.10">
    <property type="entry name" value="GroEL-like equatorial domain"/>
    <property type="match status" value="1"/>
</dbReference>
<dbReference type="Gene3D" id="3.30.260.10">
    <property type="entry name" value="TCP-1-like chaperonin intermediate domain"/>
    <property type="match status" value="1"/>
</dbReference>
<dbReference type="HAMAP" id="MF_00600">
    <property type="entry name" value="CH60"/>
    <property type="match status" value="1"/>
</dbReference>
<dbReference type="InterPro" id="IPR018370">
    <property type="entry name" value="Chaperonin_Cpn60_CS"/>
</dbReference>
<dbReference type="InterPro" id="IPR001844">
    <property type="entry name" value="Cpn60/GroEL"/>
</dbReference>
<dbReference type="InterPro" id="IPR002423">
    <property type="entry name" value="Cpn60/GroEL/TCP-1"/>
</dbReference>
<dbReference type="InterPro" id="IPR027409">
    <property type="entry name" value="GroEL-like_apical_dom_sf"/>
</dbReference>
<dbReference type="InterPro" id="IPR027413">
    <property type="entry name" value="GROEL-like_equatorial_sf"/>
</dbReference>
<dbReference type="InterPro" id="IPR027410">
    <property type="entry name" value="TCP-1-like_intermed_sf"/>
</dbReference>
<dbReference type="NCBIfam" id="TIGR02348">
    <property type="entry name" value="GroEL"/>
    <property type="match status" value="1"/>
</dbReference>
<dbReference type="NCBIfam" id="NF000592">
    <property type="entry name" value="PRK00013.1"/>
    <property type="match status" value="1"/>
</dbReference>
<dbReference type="NCBIfam" id="NF009487">
    <property type="entry name" value="PRK12849.1"/>
    <property type="match status" value="1"/>
</dbReference>
<dbReference type="NCBIfam" id="NF009488">
    <property type="entry name" value="PRK12850.1"/>
    <property type="match status" value="1"/>
</dbReference>
<dbReference type="NCBIfam" id="NF009489">
    <property type="entry name" value="PRK12851.1"/>
    <property type="match status" value="1"/>
</dbReference>
<dbReference type="PANTHER" id="PTHR45633">
    <property type="entry name" value="60 KDA HEAT SHOCK PROTEIN, MITOCHONDRIAL"/>
    <property type="match status" value="1"/>
</dbReference>
<dbReference type="Pfam" id="PF00118">
    <property type="entry name" value="Cpn60_TCP1"/>
    <property type="match status" value="1"/>
</dbReference>
<dbReference type="PRINTS" id="PR00298">
    <property type="entry name" value="CHAPERONIN60"/>
</dbReference>
<dbReference type="SUPFAM" id="SSF52029">
    <property type="entry name" value="GroEL apical domain-like"/>
    <property type="match status" value="1"/>
</dbReference>
<dbReference type="SUPFAM" id="SSF48592">
    <property type="entry name" value="GroEL equatorial domain-like"/>
    <property type="match status" value="1"/>
</dbReference>
<dbReference type="SUPFAM" id="SSF54849">
    <property type="entry name" value="GroEL-intermediate domain like"/>
    <property type="match status" value="1"/>
</dbReference>
<dbReference type="PROSITE" id="PS00296">
    <property type="entry name" value="CHAPERONINS_CPN60"/>
    <property type="match status" value="1"/>
</dbReference>
<evidence type="ECO:0000255" key="1">
    <source>
        <dbReference type="HAMAP-Rule" id="MF_00600"/>
    </source>
</evidence>
<gene>
    <name evidence="1" type="primary">groEL2</name>
    <name evidence="1" type="synonym">groL2</name>
    <name type="ordered locus">Noca_3982</name>
</gene>
<name>CH602_NOCSJ</name>
<keyword id="KW-0067">ATP-binding</keyword>
<keyword id="KW-0143">Chaperone</keyword>
<keyword id="KW-0963">Cytoplasm</keyword>
<keyword id="KW-0413">Isomerase</keyword>
<keyword id="KW-0547">Nucleotide-binding</keyword>
<keyword id="KW-1185">Reference proteome</keyword>
<feature type="chain" id="PRO_0000332033" description="Chaperonin GroEL 2">
    <location>
        <begin position="1"/>
        <end position="541"/>
    </location>
</feature>
<feature type="binding site" evidence="1">
    <location>
        <begin position="29"/>
        <end position="32"/>
    </location>
    <ligand>
        <name>ATP</name>
        <dbReference type="ChEBI" id="CHEBI:30616"/>
    </ligand>
</feature>
<feature type="binding site" evidence="1">
    <location>
        <begin position="86"/>
        <end position="90"/>
    </location>
    <ligand>
        <name>ATP</name>
        <dbReference type="ChEBI" id="CHEBI:30616"/>
    </ligand>
</feature>
<feature type="binding site" evidence="1">
    <location>
        <position position="413"/>
    </location>
    <ligand>
        <name>ATP</name>
        <dbReference type="ChEBI" id="CHEBI:30616"/>
    </ligand>
</feature>
<feature type="binding site" evidence="1">
    <location>
        <begin position="477"/>
        <end position="479"/>
    </location>
    <ligand>
        <name>ATP</name>
        <dbReference type="ChEBI" id="CHEBI:30616"/>
    </ligand>
</feature>
<feature type="binding site" evidence="1">
    <location>
        <position position="493"/>
    </location>
    <ligand>
        <name>ATP</name>
        <dbReference type="ChEBI" id="CHEBI:30616"/>
    </ligand>
</feature>
<comment type="function">
    <text evidence="1">Together with its co-chaperonin GroES, plays an essential role in assisting protein folding. The GroEL-GroES system forms a nano-cage that allows encapsulation of the non-native substrate proteins and provides a physical environment optimized to promote and accelerate protein folding.</text>
</comment>
<comment type="catalytic activity">
    <reaction evidence="1">
        <text>ATP + H2O + a folded polypeptide = ADP + phosphate + an unfolded polypeptide.</text>
        <dbReference type="EC" id="5.6.1.7"/>
    </reaction>
</comment>
<comment type="subunit">
    <text evidence="1">Forms a cylinder of 14 subunits composed of two heptameric rings stacked back-to-back. Interacts with the co-chaperonin GroES.</text>
</comment>
<comment type="subcellular location">
    <subcellularLocation>
        <location evidence="1">Cytoplasm</location>
    </subcellularLocation>
</comment>
<comment type="similarity">
    <text evidence="1">Belongs to the chaperonin (HSP60) family.</text>
</comment>
<accession>A1SNU4</accession>
<reference key="1">
    <citation type="submission" date="2006-12" db="EMBL/GenBank/DDBJ databases">
        <title>Complete sequence of chromosome 1 of Nocardioides sp. JS614.</title>
        <authorList>
            <person name="Copeland A."/>
            <person name="Lucas S."/>
            <person name="Lapidus A."/>
            <person name="Barry K."/>
            <person name="Detter J.C."/>
            <person name="Glavina del Rio T."/>
            <person name="Hammon N."/>
            <person name="Israni S."/>
            <person name="Dalin E."/>
            <person name="Tice H."/>
            <person name="Pitluck S."/>
            <person name="Thompson L.S."/>
            <person name="Brettin T."/>
            <person name="Bruce D."/>
            <person name="Han C."/>
            <person name="Tapia R."/>
            <person name="Schmutz J."/>
            <person name="Larimer F."/>
            <person name="Land M."/>
            <person name="Hauser L."/>
            <person name="Kyrpides N."/>
            <person name="Kim E."/>
            <person name="Mattes T."/>
            <person name="Gossett J."/>
            <person name="Richardson P."/>
        </authorList>
    </citation>
    <scope>NUCLEOTIDE SEQUENCE [LARGE SCALE GENOMIC DNA]</scope>
    <source>
        <strain>ATCC BAA-499 / JS614</strain>
    </source>
</reference>
<sequence length="541" mass="56828">MPKLIAFNEEARRGLERGMNTLADAVKVTLGPKGRNVVLEKKWGAPTITNDGVSIAKEIELEDPYEKIGAELVKEVAKKTDDVAGDGTTTATVLAQAMVREGLRNVAAGANPMGLKRGIEAAVEAVSGQLLSMAKDVETKEQIASTASISAADTTVGEIIAEAMDKVGKEGVITVEESNTFGLDLELTEGMRFDKGYISAYFVTDPERMETVLEDPYVLIANQKISSVKDLLPLLEKVMQSGKPLLILAEDVDGEALSTLVVNKIRGTFKSVAVKAPGFGDRRKAMLQDIAILTGGQVISEEVGLKLESTGIELLGQARKVVITKDETTIVEGAGDADQIAGRVNQIRAEIEKSDSDYDREKLQERLAKLAGGVAVIKVGAATEVELKERKHRIEDAVRNAKAAVEEGIVAGGGVALVQAANAAFDKLDLTGDEAVGAQIVRFATDAPLKQIAINAGLEGGVVAEKVRGLTAGHGLNAATGEYVDMIASGIIDPAKVTRSALQNAASIAALFLTTEAVVADKPEKAAPMGDPSGGMGGMDF</sequence>
<organism>
    <name type="scientific">Nocardioides sp. (strain ATCC BAA-499 / JS614)</name>
    <dbReference type="NCBI Taxonomy" id="196162"/>
    <lineage>
        <taxon>Bacteria</taxon>
        <taxon>Bacillati</taxon>
        <taxon>Actinomycetota</taxon>
        <taxon>Actinomycetes</taxon>
        <taxon>Propionibacteriales</taxon>
        <taxon>Nocardioidaceae</taxon>
        <taxon>Nocardioides</taxon>
    </lineage>
</organism>
<protein>
    <recommendedName>
        <fullName evidence="1">Chaperonin GroEL 2</fullName>
        <ecNumber evidence="1">5.6.1.7</ecNumber>
    </recommendedName>
    <alternativeName>
        <fullName evidence="1">60 kDa chaperonin 2</fullName>
    </alternativeName>
    <alternativeName>
        <fullName evidence="1">Chaperonin-60 2</fullName>
        <shortName evidence="1">Cpn60 2</shortName>
    </alternativeName>
</protein>